<name>PYRF_PASMU</name>
<feature type="chain" id="PRO_0000134560" description="Orotidine 5'-phosphate decarboxylase">
    <location>
        <begin position="1"/>
        <end position="233"/>
    </location>
</feature>
<feature type="active site" description="Proton donor" evidence="1">
    <location>
        <position position="61"/>
    </location>
</feature>
<feature type="binding site" evidence="1">
    <location>
        <position position="10"/>
    </location>
    <ligand>
        <name>substrate</name>
    </ligand>
</feature>
<feature type="binding site" evidence="1">
    <location>
        <position position="32"/>
    </location>
    <ligand>
        <name>substrate</name>
    </ligand>
</feature>
<feature type="binding site" evidence="1">
    <location>
        <begin position="59"/>
        <end position="68"/>
    </location>
    <ligand>
        <name>substrate</name>
    </ligand>
</feature>
<feature type="binding site" evidence="1">
    <location>
        <position position="119"/>
    </location>
    <ligand>
        <name>substrate</name>
    </ligand>
</feature>
<feature type="binding site" evidence="1">
    <location>
        <position position="180"/>
    </location>
    <ligand>
        <name>substrate</name>
    </ligand>
</feature>
<feature type="binding site" evidence="1">
    <location>
        <position position="189"/>
    </location>
    <ligand>
        <name>substrate</name>
    </ligand>
</feature>
<feature type="binding site" evidence="1">
    <location>
        <position position="209"/>
    </location>
    <ligand>
        <name>substrate</name>
    </ligand>
</feature>
<feature type="binding site" evidence="1">
    <location>
        <position position="210"/>
    </location>
    <ligand>
        <name>substrate</name>
    </ligand>
</feature>
<comment type="function">
    <text evidence="1">Catalyzes the decarboxylation of orotidine 5'-monophosphate (OMP) to uridine 5'-monophosphate (UMP).</text>
</comment>
<comment type="catalytic activity">
    <reaction evidence="1">
        <text>orotidine 5'-phosphate + H(+) = UMP + CO2</text>
        <dbReference type="Rhea" id="RHEA:11596"/>
        <dbReference type="ChEBI" id="CHEBI:15378"/>
        <dbReference type="ChEBI" id="CHEBI:16526"/>
        <dbReference type="ChEBI" id="CHEBI:57538"/>
        <dbReference type="ChEBI" id="CHEBI:57865"/>
        <dbReference type="EC" id="4.1.1.23"/>
    </reaction>
</comment>
<comment type="pathway">
    <text evidence="1">Pyrimidine metabolism; UMP biosynthesis via de novo pathway; UMP from orotate: step 2/2.</text>
</comment>
<comment type="subunit">
    <text evidence="1">Homodimer.</text>
</comment>
<comment type="similarity">
    <text evidence="1">Belongs to the OMP decarboxylase family. Type 1 subfamily.</text>
</comment>
<proteinExistence type="inferred from homology"/>
<reference key="1">
    <citation type="journal article" date="2001" name="Proc. Natl. Acad. Sci. U.S.A.">
        <title>Complete genomic sequence of Pasteurella multocida Pm70.</title>
        <authorList>
            <person name="May B.J."/>
            <person name="Zhang Q."/>
            <person name="Li L.L."/>
            <person name="Paustian M.L."/>
            <person name="Whittam T.S."/>
            <person name="Kapur V."/>
        </authorList>
    </citation>
    <scope>NUCLEOTIDE SEQUENCE [LARGE SCALE GENOMIC DNA]</scope>
    <source>
        <strain>Pm70</strain>
    </source>
</reference>
<keyword id="KW-0210">Decarboxylase</keyword>
<keyword id="KW-0456">Lyase</keyword>
<keyword id="KW-0665">Pyrimidine biosynthesis</keyword>
<keyword id="KW-1185">Reference proteome</keyword>
<dbReference type="EC" id="4.1.1.23" evidence="1"/>
<dbReference type="EMBL" id="AE004439">
    <property type="protein sequence ID" value="AAK02881.1"/>
    <property type="molecule type" value="Genomic_DNA"/>
</dbReference>
<dbReference type="RefSeq" id="WP_010906857.1">
    <property type="nucleotide sequence ID" value="NC_002663.1"/>
</dbReference>
<dbReference type="SMR" id="Q9CMM1"/>
<dbReference type="STRING" id="272843.PM0797"/>
<dbReference type="EnsemblBacteria" id="AAK02881">
    <property type="protein sequence ID" value="AAK02881"/>
    <property type="gene ID" value="PM0797"/>
</dbReference>
<dbReference type="KEGG" id="pmu:PM0797"/>
<dbReference type="PATRIC" id="fig|272843.6.peg.806"/>
<dbReference type="HOGENOM" id="CLU_067069_0_0_6"/>
<dbReference type="OrthoDB" id="9806203at2"/>
<dbReference type="UniPathway" id="UPA00070">
    <property type="reaction ID" value="UER00120"/>
</dbReference>
<dbReference type="Proteomes" id="UP000000809">
    <property type="component" value="Chromosome"/>
</dbReference>
<dbReference type="GO" id="GO:0005829">
    <property type="term" value="C:cytosol"/>
    <property type="evidence" value="ECO:0007669"/>
    <property type="project" value="TreeGrafter"/>
</dbReference>
<dbReference type="GO" id="GO:0004590">
    <property type="term" value="F:orotidine-5'-phosphate decarboxylase activity"/>
    <property type="evidence" value="ECO:0007669"/>
    <property type="project" value="UniProtKB-UniRule"/>
</dbReference>
<dbReference type="GO" id="GO:0006207">
    <property type="term" value="P:'de novo' pyrimidine nucleobase biosynthetic process"/>
    <property type="evidence" value="ECO:0007669"/>
    <property type="project" value="InterPro"/>
</dbReference>
<dbReference type="GO" id="GO:0044205">
    <property type="term" value="P:'de novo' UMP biosynthetic process"/>
    <property type="evidence" value="ECO:0007669"/>
    <property type="project" value="UniProtKB-UniRule"/>
</dbReference>
<dbReference type="CDD" id="cd04725">
    <property type="entry name" value="OMP_decarboxylase_like"/>
    <property type="match status" value="1"/>
</dbReference>
<dbReference type="FunFam" id="3.20.20.70:FF:000015">
    <property type="entry name" value="Orotidine 5'-phosphate decarboxylase"/>
    <property type="match status" value="1"/>
</dbReference>
<dbReference type="Gene3D" id="3.20.20.70">
    <property type="entry name" value="Aldolase class I"/>
    <property type="match status" value="1"/>
</dbReference>
<dbReference type="HAMAP" id="MF_01200_B">
    <property type="entry name" value="OMPdecase_type1_B"/>
    <property type="match status" value="1"/>
</dbReference>
<dbReference type="InterPro" id="IPR013785">
    <property type="entry name" value="Aldolase_TIM"/>
</dbReference>
<dbReference type="InterPro" id="IPR014732">
    <property type="entry name" value="OMPdecase"/>
</dbReference>
<dbReference type="InterPro" id="IPR018089">
    <property type="entry name" value="OMPdecase_AS"/>
</dbReference>
<dbReference type="InterPro" id="IPR047596">
    <property type="entry name" value="OMPdecase_bac"/>
</dbReference>
<dbReference type="InterPro" id="IPR001754">
    <property type="entry name" value="OMPdeCOase_dom"/>
</dbReference>
<dbReference type="InterPro" id="IPR011060">
    <property type="entry name" value="RibuloseP-bd_barrel"/>
</dbReference>
<dbReference type="NCBIfam" id="NF001273">
    <property type="entry name" value="PRK00230.1"/>
    <property type="match status" value="1"/>
</dbReference>
<dbReference type="NCBIfam" id="TIGR01740">
    <property type="entry name" value="pyrF"/>
    <property type="match status" value="1"/>
</dbReference>
<dbReference type="PANTHER" id="PTHR32119">
    <property type="entry name" value="OROTIDINE 5'-PHOSPHATE DECARBOXYLASE"/>
    <property type="match status" value="1"/>
</dbReference>
<dbReference type="PANTHER" id="PTHR32119:SF2">
    <property type="entry name" value="OROTIDINE 5'-PHOSPHATE DECARBOXYLASE"/>
    <property type="match status" value="1"/>
</dbReference>
<dbReference type="Pfam" id="PF00215">
    <property type="entry name" value="OMPdecase"/>
    <property type="match status" value="1"/>
</dbReference>
<dbReference type="SMART" id="SM00934">
    <property type="entry name" value="OMPdecase"/>
    <property type="match status" value="1"/>
</dbReference>
<dbReference type="SUPFAM" id="SSF51366">
    <property type="entry name" value="Ribulose-phoshate binding barrel"/>
    <property type="match status" value="1"/>
</dbReference>
<dbReference type="PROSITE" id="PS00156">
    <property type="entry name" value="OMPDECASE"/>
    <property type="match status" value="1"/>
</dbReference>
<accession>Q9CMM1</accession>
<protein>
    <recommendedName>
        <fullName evidence="1">Orotidine 5'-phosphate decarboxylase</fullName>
        <ecNumber evidence="1">4.1.1.23</ecNumber>
    </recommendedName>
    <alternativeName>
        <fullName evidence="1">OMP decarboxylase</fullName>
        <shortName evidence="1">OMPDCase</shortName>
        <shortName evidence="1">OMPdecase</shortName>
    </alternativeName>
</protein>
<evidence type="ECO:0000255" key="1">
    <source>
        <dbReference type="HAMAP-Rule" id="MF_01200"/>
    </source>
</evidence>
<gene>
    <name evidence="1" type="primary">pyrF</name>
    <name type="ordered locus">PM0797</name>
</gene>
<organism>
    <name type="scientific">Pasteurella multocida (strain Pm70)</name>
    <dbReference type="NCBI Taxonomy" id="272843"/>
    <lineage>
        <taxon>Bacteria</taxon>
        <taxon>Pseudomonadati</taxon>
        <taxon>Pseudomonadota</taxon>
        <taxon>Gammaproteobacteria</taxon>
        <taxon>Pasteurellales</taxon>
        <taxon>Pasteurellaceae</taxon>
        <taxon>Pasteurella</taxon>
    </lineage>
</organism>
<sequence>MTSKIIVALDYEKEEEALCLVDQIDPSLCRLKVGKEMFTTLGTKFVKALHDRNFDVFLDLKFHDIPNTVARAVRSAADLGVWMVDLHASGGLRMMEEAKKILEPYGKDAPLLISVTVLTSMEDLDLLQIGINASPMEQVIRLANLTQRAGLDGVVCSPQEVEILRANCGKDFKLITPGIRPIGSDFGDQRRVMTPAGAIQAGSDYLVIGRPITQADNPAEVLKSINASLPVNR</sequence>